<organism>
    <name type="scientific">Treponema pallidum (strain Nichols)</name>
    <dbReference type="NCBI Taxonomy" id="243276"/>
    <lineage>
        <taxon>Bacteria</taxon>
        <taxon>Pseudomonadati</taxon>
        <taxon>Spirochaetota</taxon>
        <taxon>Spirochaetia</taxon>
        <taxon>Spirochaetales</taxon>
        <taxon>Treponemataceae</taxon>
        <taxon>Treponema</taxon>
    </lineage>
</organism>
<comment type="function">
    <text evidence="1">HflC and HflK could encode or regulate a protease.</text>
</comment>
<comment type="subunit">
    <text>HflC and HflK may interact to form a multimeric complex.</text>
</comment>
<comment type="subcellular location">
    <subcellularLocation>
        <location evidence="3">Membrane</location>
        <topology evidence="3">Single-pass membrane protein</topology>
    </subcellularLocation>
</comment>
<comment type="similarity">
    <text evidence="3">Belongs to the band 7/mec-2 family. HflK subfamily.</text>
</comment>
<evidence type="ECO:0000250" key="1"/>
<evidence type="ECO:0000255" key="2"/>
<evidence type="ECO:0000305" key="3"/>
<reference key="1">
    <citation type="journal article" date="1998" name="Science">
        <title>Complete genome sequence of Treponema pallidum, the syphilis spirochete.</title>
        <authorList>
            <person name="Fraser C.M."/>
            <person name="Norris S.J."/>
            <person name="Weinstock G.M."/>
            <person name="White O."/>
            <person name="Sutton G.G."/>
            <person name="Dodson R.J."/>
            <person name="Gwinn M.L."/>
            <person name="Hickey E.K."/>
            <person name="Clayton R.A."/>
            <person name="Ketchum K.A."/>
            <person name="Sodergren E."/>
            <person name="Hardham J.M."/>
            <person name="McLeod M.P."/>
            <person name="Salzberg S.L."/>
            <person name="Peterson J.D."/>
            <person name="Khalak H.G."/>
            <person name="Richardson D.L."/>
            <person name="Howell J.K."/>
            <person name="Chidambaram M."/>
            <person name="Utterback T.R."/>
            <person name="McDonald L.A."/>
            <person name="Artiach P."/>
            <person name="Bowman C."/>
            <person name="Cotton M.D."/>
            <person name="Fujii C."/>
            <person name="Garland S.A."/>
            <person name="Hatch B."/>
            <person name="Horst K."/>
            <person name="Roberts K.M."/>
            <person name="Sandusky M."/>
            <person name="Weidman J.F."/>
            <person name="Smith H.O."/>
            <person name="Venter J.C."/>
        </authorList>
    </citation>
    <scope>NUCLEOTIDE SEQUENCE [LARGE SCALE GENOMIC DNA]</scope>
    <source>
        <strain>Nichols</strain>
    </source>
</reference>
<name>HFLK_TREPA</name>
<feature type="chain" id="PRO_0000094088" description="Protein HflK">
    <location>
        <begin position="1"/>
        <end position="328"/>
    </location>
</feature>
<feature type="transmembrane region" description="Helical" evidence="2">
    <location>
        <begin position="13"/>
        <end position="33"/>
    </location>
</feature>
<accession>O83151</accession>
<proteinExistence type="inferred from homology"/>
<protein>
    <recommendedName>
        <fullName>Protein HflK</fullName>
    </recommendedName>
</protein>
<dbReference type="EMBL" id="AE000520">
    <property type="protein sequence ID" value="AAC65102.1"/>
    <property type="molecule type" value="Genomic_DNA"/>
</dbReference>
<dbReference type="PIR" id="H71364">
    <property type="entry name" value="H71364"/>
</dbReference>
<dbReference type="RefSeq" id="WP_010881562.1">
    <property type="nucleotide sequence ID" value="NC_021490.2"/>
</dbReference>
<dbReference type="SMR" id="O83151"/>
<dbReference type="IntAct" id="O83151">
    <property type="interactions" value="5"/>
</dbReference>
<dbReference type="STRING" id="243276.TP_0113"/>
<dbReference type="EnsemblBacteria" id="AAC65102">
    <property type="protein sequence ID" value="AAC65102"/>
    <property type="gene ID" value="TP_0113"/>
</dbReference>
<dbReference type="GeneID" id="93875910"/>
<dbReference type="KEGG" id="tpa:TP_0113"/>
<dbReference type="KEGG" id="tpw:TPANIC_0113"/>
<dbReference type="eggNOG" id="COG0330">
    <property type="taxonomic scope" value="Bacteria"/>
</dbReference>
<dbReference type="HOGENOM" id="CLU_039173_0_1_12"/>
<dbReference type="OrthoDB" id="9779595at2"/>
<dbReference type="Proteomes" id="UP000000811">
    <property type="component" value="Chromosome"/>
</dbReference>
<dbReference type="GO" id="GO:0016020">
    <property type="term" value="C:membrane"/>
    <property type="evidence" value="ECO:0007669"/>
    <property type="project" value="UniProtKB-SubCell"/>
</dbReference>
<dbReference type="CDD" id="cd03404">
    <property type="entry name" value="SPFH_HflK"/>
    <property type="match status" value="1"/>
</dbReference>
<dbReference type="Gene3D" id="3.30.479.30">
    <property type="entry name" value="Band 7 domain"/>
    <property type="match status" value="1"/>
</dbReference>
<dbReference type="InterPro" id="IPR050710">
    <property type="entry name" value="Band7/mec-2_domain"/>
</dbReference>
<dbReference type="InterPro" id="IPR001107">
    <property type="entry name" value="Band_7"/>
</dbReference>
<dbReference type="InterPro" id="IPR036013">
    <property type="entry name" value="Band_7/SPFH_dom_sf"/>
</dbReference>
<dbReference type="InterPro" id="IPR010201">
    <property type="entry name" value="HflK"/>
</dbReference>
<dbReference type="NCBIfam" id="TIGR01933">
    <property type="entry name" value="hflK"/>
    <property type="match status" value="1"/>
</dbReference>
<dbReference type="PANTHER" id="PTHR43327:SF2">
    <property type="entry name" value="MODULATOR OF FTSH PROTEASE HFLK"/>
    <property type="match status" value="1"/>
</dbReference>
<dbReference type="PANTHER" id="PTHR43327">
    <property type="entry name" value="STOMATIN-LIKE PROTEIN 2, MITOCHONDRIAL"/>
    <property type="match status" value="1"/>
</dbReference>
<dbReference type="Pfam" id="PF01145">
    <property type="entry name" value="Band_7"/>
    <property type="match status" value="1"/>
</dbReference>
<dbReference type="SMART" id="SM00244">
    <property type="entry name" value="PHB"/>
    <property type="match status" value="1"/>
</dbReference>
<dbReference type="SUPFAM" id="SSF117892">
    <property type="entry name" value="Band 7/SPFH domain"/>
    <property type="match status" value="1"/>
</dbReference>
<keyword id="KW-0472">Membrane</keyword>
<keyword id="KW-1185">Reference proteome</keyword>
<keyword id="KW-0812">Transmembrane</keyword>
<keyword id="KW-1133">Transmembrane helix</keyword>
<sequence>MRIPKWTPATWSVVAGCIGGVLGIVIVGIASPIRIISPTDNGVVTRFGKYHRTLEPGLHYLIPFVEWVYKVPVTKVQKEEFGFRTSKSSEQSHYVNNISHESLMLTGDLNIVDVEWVVQYRIVDPRAWVFNVESQERRQTIRDISKAVVNSLIGDRAILDIMGPERSAIQMRAKDMMNVLLKRIGLGVLVSSVQLQNVVPPQEVQQAFEDVNIAIQDMNRLINEGKESYNREIPKARGDADKLIQEAMGYANERVNRAKGDVARFDSIYAEYVKAPHVTKTRLYLEGLGAILEKTENVLLIDKKLENLLTLKDISKVSKKVVAGTREE</sequence>
<gene>
    <name type="primary">hflK</name>
    <name type="ordered locus">TP_0113</name>
</gene>